<gene>
    <name type="primary">Cyp6a2</name>
    <name type="synonym">CYT-P450-B1</name>
    <name type="ORF">CG9438</name>
</gene>
<keyword id="KW-0256">Endoplasmic reticulum</keyword>
<keyword id="KW-0349">Heme</keyword>
<keyword id="KW-0408">Iron</keyword>
<keyword id="KW-0472">Membrane</keyword>
<keyword id="KW-0479">Metal-binding</keyword>
<keyword id="KW-0492">Microsome</keyword>
<keyword id="KW-0503">Monooxygenase</keyword>
<keyword id="KW-0560">Oxidoreductase</keyword>
<keyword id="KW-1185">Reference proteome</keyword>
<name>CP6A2_DROME</name>
<comment type="function">
    <text evidence="2">Is involved in the breakdown of synthetic insecticides and may be involved in the metabolism of insect hormones.</text>
</comment>
<comment type="cofactor">
    <cofactor evidence="1">
        <name>heme</name>
        <dbReference type="ChEBI" id="CHEBI:30413"/>
    </cofactor>
</comment>
<comment type="subcellular location">
    <subcellularLocation>
        <location>Endoplasmic reticulum membrane</location>
        <topology>Peripheral membrane protein</topology>
    </subcellularLocation>
    <subcellularLocation>
        <location>Microsome membrane</location>
        <topology>Peripheral membrane protein</topology>
    </subcellularLocation>
</comment>
<comment type="similarity">
    <text evidence="3">Belongs to the cytochrome P450 family.</text>
</comment>
<feature type="chain" id="PRO_0000051866" description="Cytochrome P450 6a2">
    <location>
        <begin position="1"/>
        <end position="506"/>
    </location>
</feature>
<feature type="binding site" description="axial binding residue" evidence="1">
    <location>
        <position position="451"/>
    </location>
    <ligand>
        <name>heme</name>
        <dbReference type="ChEBI" id="CHEBI:30413"/>
    </ligand>
    <ligandPart>
        <name>Fe</name>
        <dbReference type="ChEBI" id="CHEBI:18248"/>
    </ligandPart>
</feature>
<feature type="sequence conflict" description="In Ref. 1; AAA28438/AAB24525." evidence="3" ref="1">
    <original>V</original>
    <variation>L</variation>
    <location>
        <position position="31"/>
    </location>
</feature>
<feature type="sequence conflict" description="In Ref. 1; AAA28438/AAB24525, 3; AAB36782 and 4; no nucleotide entry." evidence="3" ref="1 3 4">
    <original>A</original>
    <variation>R</variation>
    <location>
        <position position="191"/>
    </location>
</feature>
<feature type="sequence conflict" description="In Ref. 1; AAA28438/AAB24525 and 4; no nucleotide entry." evidence="3" ref="1 4">
    <original>RV</original>
    <variation>SSF</variation>
    <location>
        <begin position="283"/>
        <end position="284"/>
    </location>
</feature>
<organism>
    <name type="scientific">Drosophila melanogaster</name>
    <name type="common">Fruit fly</name>
    <dbReference type="NCBI Taxonomy" id="7227"/>
    <lineage>
        <taxon>Eukaryota</taxon>
        <taxon>Metazoa</taxon>
        <taxon>Ecdysozoa</taxon>
        <taxon>Arthropoda</taxon>
        <taxon>Hexapoda</taxon>
        <taxon>Insecta</taxon>
        <taxon>Pterygota</taxon>
        <taxon>Neoptera</taxon>
        <taxon>Endopterygota</taxon>
        <taxon>Diptera</taxon>
        <taxon>Brachycera</taxon>
        <taxon>Muscomorpha</taxon>
        <taxon>Ephydroidea</taxon>
        <taxon>Drosophilidae</taxon>
        <taxon>Drosophila</taxon>
        <taxon>Sophophora</taxon>
    </lineage>
</organism>
<evidence type="ECO:0000250" key="1"/>
<evidence type="ECO:0000269" key="2">
    <source>
    </source>
</evidence>
<evidence type="ECO:0000305" key="3"/>
<sequence length="506" mass="58685">MFVLIYLLIAISSLLAYLYHRNFNYWNRRGVPHDAPHPLYGNMVGFRKNRVMHDFFYDYYNKYRKSGFPFVGFYFLHKPAAFIVDTQLAKNILIKDFSNFADRGQFHNGRDDPLTQHLFNLDGKKWKDMRQRLTPTFTSGKMKFMFPTVIKVSEEFVKVITEQVPAAQNGAVLEIKELMARFTTDVIGTCAFGIECNTLRTPVSDFRTMGQKVFTDMRHGKLLTMFVFSFPKLASRLRMRMMPEDVHQFFMRLVNDTIALRERENFKRNDFMNLLIELKQKGRVTLDNGEVIEGMDIGELAAQVFVFYVAGFETSSSTMSYCLYELAQNQDIQDRLRNEIQTVLEEQEGQLTYESIKAMTYLNQVISETLRLYTLVPHLERKALNDYVVPGHEKLVIEKGTQVIIPACAYHRDEDLYPNPETFDPERFSPEKVAARESVEWLPFGDGPRNCIGMRFGQMQARIGLAQIISRFRVSVCDTTEIPLKYSPMSIVLGTVGGIYLRVERI</sequence>
<reference key="1">
    <citation type="journal article" date="1992" name="Proc. Natl. Acad. Sci. U.S.A.">
        <title>Possible involvement of the long terminal repeat of transposable element 17.6 in regulating expression of an insecticide resistance-associated P450 gene in Drosophila.</title>
        <authorList>
            <person name="Waters L.C."/>
            <person name="Zelhof A.C."/>
            <person name="Shaw B.J."/>
            <person name="Ch'Ang L.-Y."/>
        </authorList>
    </citation>
    <scope>NUCLEOTIDE SEQUENCE [GENOMIC DNA]</scope>
    <source>
        <strain>91-C</strain>
    </source>
</reference>
<reference key="2">
    <citation type="journal article" date="1992" name="Proc. Natl. Acad. Sci. U.S.A.">
        <authorList>
            <person name="Waters L.C."/>
            <person name="Zelhof A.C."/>
            <person name="Shaw B.J."/>
            <person name="Ch'Ang L.-Y."/>
        </authorList>
    </citation>
    <scope>ERRATUM OF PUBMED:1317576</scope>
</reference>
<reference key="3">
    <citation type="submission" date="1996-12" db="EMBL/GenBank/DDBJ databases">
        <title>Drosophila melanogaster Cyp6a2 gene.</title>
        <authorList>
            <person name="Dunkov B.C."/>
            <person name="Feyereisen R."/>
        </authorList>
    </citation>
    <scope>NUCLEOTIDE SEQUENCE [GENOMIC DNA]</scope>
    <source>
        <strain>Iso-1</strain>
    </source>
</reference>
<reference key="4">
    <citation type="journal article" date="1997" name="DNA Cell Biol.">
        <title>The Drosophila cytochrome P450 gene Cyp6a2: structure, localization, heterologous expression, and induction by phenobarbital.</title>
        <authorList>
            <person name="Dunkov B.C."/>
            <person name="Guzov V.M."/>
            <person name="Mocelin G."/>
            <person name="Shotkoski F."/>
            <person name="Brun A."/>
            <person name="Amichot M."/>
            <person name="ffrench-Constant R.H."/>
            <person name="Feyereisen R."/>
        </authorList>
    </citation>
    <scope>NUCLEOTIDE SEQUENCE [GENOMIC DNA]</scope>
    <scope>FUNCTION</scope>
    <source>
        <strain>Canton-S</strain>
    </source>
</reference>
<reference key="5">
    <citation type="journal article" date="2000" name="Science">
        <title>The genome sequence of Drosophila melanogaster.</title>
        <authorList>
            <person name="Adams M.D."/>
            <person name="Celniker S.E."/>
            <person name="Holt R.A."/>
            <person name="Evans C.A."/>
            <person name="Gocayne J.D."/>
            <person name="Amanatides P.G."/>
            <person name="Scherer S.E."/>
            <person name="Li P.W."/>
            <person name="Hoskins R.A."/>
            <person name="Galle R.F."/>
            <person name="George R.A."/>
            <person name="Lewis S.E."/>
            <person name="Richards S."/>
            <person name="Ashburner M."/>
            <person name="Henderson S.N."/>
            <person name="Sutton G.G."/>
            <person name="Wortman J.R."/>
            <person name="Yandell M.D."/>
            <person name="Zhang Q."/>
            <person name="Chen L.X."/>
            <person name="Brandon R.C."/>
            <person name="Rogers Y.-H.C."/>
            <person name="Blazej R.G."/>
            <person name="Champe M."/>
            <person name="Pfeiffer B.D."/>
            <person name="Wan K.H."/>
            <person name="Doyle C."/>
            <person name="Baxter E.G."/>
            <person name="Helt G."/>
            <person name="Nelson C.R."/>
            <person name="Miklos G.L.G."/>
            <person name="Abril J.F."/>
            <person name="Agbayani A."/>
            <person name="An H.-J."/>
            <person name="Andrews-Pfannkoch C."/>
            <person name="Baldwin D."/>
            <person name="Ballew R.M."/>
            <person name="Basu A."/>
            <person name="Baxendale J."/>
            <person name="Bayraktaroglu L."/>
            <person name="Beasley E.M."/>
            <person name="Beeson K.Y."/>
            <person name="Benos P.V."/>
            <person name="Berman B.P."/>
            <person name="Bhandari D."/>
            <person name="Bolshakov S."/>
            <person name="Borkova D."/>
            <person name="Botchan M.R."/>
            <person name="Bouck J."/>
            <person name="Brokstein P."/>
            <person name="Brottier P."/>
            <person name="Burtis K.C."/>
            <person name="Busam D.A."/>
            <person name="Butler H."/>
            <person name="Cadieu E."/>
            <person name="Center A."/>
            <person name="Chandra I."/>
            <person name="Cherry J.M."/>
            <person name="Cawley S."/>
            <person name="Dahlke C."/>
            <person name="Davenport L.B."/>
            <person name="Davies P."/>
            <person name="de Pablos B."/>
            <person name="Delcher A."/>
            <person name="Deng Z."/>
            <person name="Mays A.D."/>
            <person name="Dew I."/>
            <person name="Dietz S.M."/>
            <person name="Dodson K."/>
            <person name="Doup L.E."/>
            <person name="Downes M."/>
            <person name="Dugan-Rocha S."/>
            <person name="Dunkov B.C."/>
            <person name="Dunn P."/>
            <person name="Durbin K.J."/>
            <person name="Evangelista C.C."/>
            <person name="Ferraz C."/>
            <person name="Ferriera S."/>
            <person name="Fleischmann W."/>
            <person name="Fosler C."/>
            <person name="Gabrielian A.E."/>
            <person name="Garg N.S."/>
            <person name="Gelbart W.M."/>
            <person name="Glasser K."/>
            <person name="Glodek A."/>
            <person name="Gong F."/>
            <person name="Gorrell J.H."/>
            <person name="Gu Z."/>
            <person name="Guan P."/>
            <person name="Harris M."/>
            <person name="Harris N.L."/>
            <person name="Harvey D.A."/>
            <person name="Heiman T.J."/>
            <person name="Hernandez J.R."/>
            <person name="Houck J."/>
            <person name="Hostin D."/>
            <person name="Houston K.A."/>
            <person name="Howland T.J."/>
            <person name="Wei M.-H."/>
            <person name="Ibegwam C."/>
            <person name="Jalali M."/>
            <person name="Kalush F."/>
            <person name="Karpen G.H."/>
            <person name="Ke Z."/>
            <person name="Kennison J.A."/>
            <person name="Ketchum K.A."/>
            <person name="Kimmel B.E."/>
            <person name="Kodira C.D."/>
            <person name="Kraft C.L."/>
            <person name="Kravitz S."/>
            <person name="Kulp D."/>
            <person name="Lai Z."/>
            <person name="Lasko P."/>
            <person name="Lei Y."/>
            <person name="Levitsky A.A."/>
            <person name="Li J.H."/>
            <person name="Li Z."/>
            <person name="Liang Y."/>
            <person name="Lin X."/>
            <person name="Liu X."/>
            <person name="Mattei B."/>
            <person name="McIntosh T.C."/>
            <person name="McLeod M.P."/>
            <person name="McPherson D."/>
            <person name="Merkulov G."/>
            <person name="Milshina N.V."/>
            <person name="Mobarry C."/>
            <person name="Morris J."/>
            <person name="Moshrefi A."/>
            <person name="Mount S.M."/>
            <person name="Moy M."/>
            <person name="Murphy B."/>
            <person name="Murphy L."/>
            <person name="Muzny D.M."/>
            <person name="Nelson D.L."/>
            <person name="Nelson D.R."/>
            <person name="Nelson K.A."/>
            <person name="Nixon K."/>
            <person name="Nusskern D.R."/>
            <person name="Pacleb J.M."/>
            <person name="Palazzolo M."/>
            <person name="Pittman G.S."/>
            <person name="Pan S."/>
            <person name="Pollard J."/>
            <person name="Puri V."/>
            <person name="Reese M.G."/>
            <person name="Reinert K."/>
            <person name="Remington K."/>
            <person name="Saunders R.D.C."/>
            <person name="Scheeler F."/>
            <person name="Shen H."/>
            <person name="Shue B.C."/>
            <person name="Siden-Kiamos I."/>
            <person name="Simpson M."/>
            <person name="Skupski M.P."/>
            <person name="Smith T.J."/>
            <person name="Spier E."/>
            <person name="Spradling A.C."/>
            <person name="Stapleton M."/>
            <person name="Strong R."/>
            <person name="Sun E."/>
            <person name="Svirskas R."/>
            <person name="Tector C."/>
            <person name="Turner R."/>
            <person name="Venter E."/>
            <person name="Wang A.H."/>
            <person name="Wang X."/>
            <person name="Wang Z.-Y."/>
            <person name="Wassarman D.A."/>
            <person name="Weinstock G.M."/>
            <person name="Weissenbach J."/>
            <person name="Williams S.M."/>
            <person name="Woodage T."/>
            <person name="Worley K.C."/>
            <person name="Wu D."/>
            <person name="Yang S."/>
            <person name="Yao Q.A."/>
            <person name="Ye J."/>
            <person name="Yeh R.-F."/>
            <person name="Zaveri J.S."/>
            <person name="Zhan M."/>
            <person name="Zhang G."/>
            <person name="Zhao Q."/>
            <person name="Zheng L."/>
            <person name="Zheng X.H."/>
            <person name="Zhong F.N."/>
            <person name="Zhong W."/>
            <person name="Zhou X."/>
            <person name="Zhu S.C."/>
            <person name="Zhu X."/>
            <person name="Smith H.O."/>
            <person name="Gibbs R.A."/>
            <person name="Myers E.W."/>
            <person name="Rubin G.M."/>
            <person name="Venter J.C."/>
        </authorList>
    </citation>
    <scope>NUCLEOTIDE SEQUENCE [LARGE SCALE GENOMIC DNA]</scope>
    <source>
        <strain>Berkeley</strain>
    </source>
</reference>
<reference key="6">
    <citation type="journal article" date="2002" name="Genome Biol.">
        <title>Annotation of the Drosophila melanogaster euchromatic genome: a systematic review.</title>
        <authorList>
            <person name="Misra S."/>
            <person name="Crosby M.A."/>
            <person name="Mungall C.J."/>
            <person name="Matthews B.B."/>
            <person name="Campbell K.S."/>
            <person name="Hradecky P."/>
            <person name="Huang Y."/>
            <person name="Kaminker J.S."/>
            <person name="Millburn G.H."/>
            <person name="Prochnik S.E."/>
            <person name="Smith C.D."/>
            <person name="Tupy J.L."/>
            <person name="Whitfield E.J."/>
            <person name="Bayraktaroglu L."/>
            <person name="Berman B.P."/>
            <person name="Bettencourt B.R."/>
            <person name="Celniker S.E."/>
            <person name="de Grey A.D.N.J."/>
            <person name="Drysdale R.A."/>
            <person name="Harris N.L."/>
            <person name="Richter J."/>
            <person name="Russo S."/>
            <person name="Schroeder A.J."/>
            <person name="Shu S.Q."/>
            <person name="Stapleton M."/>
            <person name="Yamada C."/>
            <person name="Ashburner M."/>
            <person name="Gelbart W.M."/>
            <person name="Rubin G.M."/>
            <person name="Lewis S.E."/>
        </authorList>
    </citation>
    <scope>GENOME REANNOTATION</scope>
    <source>
        <strain>Berkeley</strain>
    </source>
</reference>
<reference key="7">
    <citation type="submission" date="2004-10" db="EMBL/GenBank/DDBJ databases">
        <authorList>
            <person name="Stapleton M."/>
            <person name="Carlson J.W."/>
            <person name="Chavez C."/>
            <person name="Frise E."/>
            <person name="George R.A."/>
            <person name="Pacleb J.M."/>
            <person name="Park S."/>
            <person name="Wan K.H."/>
            <person name="Yu C."/>
            <person name="Rubin G.M."/>
            <person name="Celniker S.E."/>
        </authorList>
    </citation>
    <scope>NUCLEOTIDE SEQUENCE [LARGE SCALE MRNA]</scope>
    <source>
        <strain>Berkeley</strain>
        <tissue>Head</tissue>
    </source>
</reference>
<reference key="8">
    <citation type="journal article" date="1996" name="Environ. Mol. Mutagen.">
        <title>Metabolism of promutagens catalyzed by Drosophila melanogaster CYP6A2 enzyme in Saccharomyces cerevisiae.</title>
        <authorList>
            <person name="Saner C."/>
            <person name="Weibel B."/>
            <person name="Wurgler F.E."/>
            <person name="Sengstag C."/>
        </authorList>
    </citation>
    <scope>NUCLEOTIDE SEQUENCE [GENOMIC DNA] OF 352-383</scope>
</reference>
<protein>
    <recommendedName>
        <fullName>Cytochrome P450 6a2</fullName>
        <ecNumber>1.14.-.-</ecNumber>
    </recommendedName>
    <alternativeName>
        <fullName>CYPVIA2</fullName>
    </alternativeName>
    <alternativeName>
        <fullName>Cytochrome P450-B1</fullName>
    </alternativeName>
</protein>
<dbReference type="EC" id="1.14.-.-"/>
<dbReference type="EMBL" id="M88009">
    <property type="protein sequence ID" value="AAA28438.1"/>
    <property type="molecule type" value="Genomic_DNA"/>
</dbReference>
<dbReference type="EMBL" id="S51248">
    <property type="protein sequence ID" value="AAB24525.1"/>
    <property type="molecule type" value="mRNA"/>
</dbReference>
<dbReference type="EMBL" id="U78088">
    <property type="protein sequence ID" value="AAB36782.1"/>
    <property type="molecule type" value="Genomic_DNA"/>
</dbReference>
<dbReference type="EMBL" id="AE013599">
    <property type="protein sequence ID" value="AAM70832.1"/>
    <property type="molecule type" value="Genomic_DNA"/>
</dbReference>
<dbReference type="EMBL" id="BT015971">
    <property type="protein sequence ID" value="AAV36856.1"/>
    <property type="molecule type" value="mRNA"/>
</dbReference>
<dbReference type="EMBL" id="S81983">
    <property type="protein sequence ID" value="AAB36460.1"/>
    <property type="molecule type" value="Genomic_DNA"/>
</dbReference>
<dbReference type="PIR" id="A45378">
    <property type="entry name" value="A47198"/>
</dbReference>
<dbReference type="RefSeq" id="NP_523628.1">
    <property type="nucleotide sequence ID" value="NM_078904.2"/>
</dbReference>
<dbReference type="SMR" id="P33270"/>
<dbReference type="BioGRID" id="61483">
    <property type="interactions" value="1"/>
</dbReference>
<dbReference type="FunCoup" id="P33270">
    <property type="interactions" value="24"/>
</dbReference>
<dbReference type="STRING" id="7227.FBpp0085466"/>
<dbReference type="PaxDb" id="7227-FBpp0085466"/>
<dbReference type="DNASU" id="35587"/>
<dbReference type="EnsemblMetazoa" id="FBtr0086133">
    <property type="protein sequence ID" value="FBpp0085466"/>
    <property type="gene ID" value="FBgn0000473"/>
</dbReference>
<dbReference type="GeneID" id="35587"/>
<dbReference type="KEGG" id="dme:Dmel_CG9438"/>
<dbReference type="AGR" id="FB:FBgn0289743"/>
<dbReference type="CTD" id="35587"/>
<dbReference type="FlyBase" id="FBgn0289743">
    <property type="gene designation" value="Cyp6a2"/>
</dbReference>
<dbReference type="VEuPathDB" id="VectorBase:FBgn0000473"/>
<dbReference type="eggNOG" id="KOG0158">
    <property type="taxonomic scope" value="Eukaryota"/>
</dbReference>
<dbReference type="GeneTree" id="ENSGT00940000165972"/>
<dbReference type="HOGENOM" id="CLU_001570_5_2_1"/>
<dbReference type="InParanoid" id="P33270"/>
<dbReference type="OMA" id="PLKYTPM"/>
<dbReference type="OrthoDB" id="2789670at2759"/>
<dbReference type="PhylomeDB" id="P33270"/>
<dbReference type="BioGRID-ORCS" id="35587">
    <property type="hits" value="0 hits in 3 CRISPR screens"/>
</dbReference>
<dbReference type="GenomeRNAi" id="35587"/>
<dbReference type="PRO" id="PR:P33270"/>
<dbReference type="Proteomes" id="UP000000803">
    <property type="component" value="Chromosome 2R"/>
</dbReference>
<dbReference type="Bgee" id="FBgn0000473">
    <property type="expression patterns" value="Expressed in adult Malpighian tubule principal cell of lower segment in Malpighian tubule and 63 other cell types or tissues"/>
</dbReference>
<dbReference type="ExpressionAtlas" id="P33270">
    <property type="expression patterns" value="baseline and differential"/>
</dbReference>
<dbReference type="GO" id="GO:0005789">
    <property type="term" value="C:endoplasmic reticulum membrane"/>
    <property type="evidence" value="ECO:0007669"/>
    <property type="project" value="UniProtKB-SubCell"/>
</dbReference>
<dbReference type="GO" id="GO:0020037">
    <property type="term" value="F:heme binding"/>
    <property type="evidence" value="ECO:0007669"/>
    <property type="project" value="InterPro"/>
</dbReference>
<dbReference type="GO" id="GO:0005506">
    <property type="term" value="F:iron ion binding"/>
    <property type="evidence" value="ECO:0007669"/>
    <property type="project" value="InterPro"/>
</dbReference>
<dbReference type="GO" id="GO:0004497">
    <property type="term" value="F:monooxygenase activity"/>
    <property type="evidence" value="ECO:0007669"/>
    <property type="project" value="UniProtKB-KW"/>
</dbReference>
<dbReference type="GO" id="GO:0016705">
    <property type="term" value="F:oxidoreductase activity, acting on paired donors, with incorporation or reduction of molecular oxygen"/>
    <property type="evidence" value="ECO:0007669"/>
    <property type="project" value="InterPro"/>
</dbReference>
<dbReference type="GO" id="GO:0031000">
    <property type="term" value="P:response to caffeine"/>
    <property type="evidence" value="ECO:0000314"/>
    <property type="project" value="FlyBase"/>
</dbReference>
<dbReference type="GO" id="GO:0046680">
    <property type="term" value="P:response to DDT"/>
    <property type="evidence" value="ECO:0000315"/>
    <property type="project" value="FlyBase"/>
</dbReference>
<dbReference type="CDD" id="cd11056">
    <property type="entry name" value="CYP6-like"/>
    <property type="match status" value="1"/>
</dbReference>
<dbReference type="FunFam" id="1.10.630.10:FF:000042">
    <property type="entry name" value="Cytochrome P450"/>
    <property type="match status" value="1"/>
</dbReference>
<dbReference type="Gene3D" id="1.10.630.10">
    <property type="entry name" value="Cytochrome P450"/>
    <property type="match status" value="1"/>
</dbReference>
<dbReference type="InterPro" id="IPR001128">
    <property type="entry name" value="Cyt_P450"/>
</dbReference>
<dbReference type="InterPro" id="IPR017972">
    <property type="entry name" value="Cyt_P450_CS"/>
</dbReference>
<dbReference type="InterPro" id="IPR002401">
    <property type="entry name" value="Cyt_P450_E_grp-I"/>
</dbReference>
<dbReference type="InterPro" id="IPR036396">
    <property type="entry name" value="Cyt_P450_sf"/>
</dbReference>
<dbReference type="InterPro" id="IPR050476">
    <property type="entry name" value="Insect_CytP450_Detox"/>
</dbReference>
<dbReference type="PANTHER" id="PTHR24292">
    <property type="entry name" value="CYTOCHROME P450"/>
    <property type="match status" value="1"/>
</dbReference>
<dbReference type="PANTHER" id="PTHR24292:SF100">
    <property type="entry name" value="CYTOCHROME P450 6A16, ISOFORM B-RELATED"/>
    <property type="match status" value="1"/>
</dbReference>
<dbReference type="Pfam" id="PF00067">
    <property type="entry name" value="p450"/>
    <property type="match status" value="1"/>
</dbReference>
<dbReference type="PRINTS" id="PR00463">
    <property type="entry name" value="EP450I"/>
</dbReference>
<dbReference type="PRINTS" id="PR00385">
    <property type="entry name" value="P450"/>
</dbReference>
<dbReference type="SUPFAM" id="SSF48264">
    <property type="entry name" value="Cytochrome P450"/>
    <property type="match status" value="1"/>
</dbReference>
<dbReference type="PROSITE" id="PS00086">
    <property type="entry name" value="CYTOCHROME_P450"/>
    <property type="match status" value="1"/>
</dbReference>
<accession>P33270</accession>
<accession>P91669</accession>
<accession>Q5U1C1</accession>
<accession>Q9V9A2</accession>
<proteinExistence type="evidence at transcript level"/>